<accession>A1USQ7</accession>
<gene>
    <name evidence="1" type="primary">rpsN</name>
    <name type="ordered locus">BARBAKC583_0711</name>
</gene>
<dbReference type="EMBL" id="CP000524">
    <property type="protein sequence ID" value="ABM45477.1"/>
    <property type="molecule type" value="Genomic_DNA"/>
</dbReference>
<dbReference type="RefSeq" id="WP_005766938.1">
    <property type="nucleotide sequence ID" value="NC_008783.1"/>
</dbReference>
<dbReference type="SMR" id="A1USQ7"/>
<dbReference type="STRING" id="360095.BARBAKC583_0711"/>
<dbReference type="GeneID" id="4684418"/>
<dbReference type="KEGG" id="bbk:BARBAKC583_0711"/>
<dbReference type="PATRIC" id="fig|360095.6.peg.690"/>
<dbReference type="eggNOG" id="COG0199">
    <property type="taxonomic scope" value="Bacteria"/>
</dbReference>
<dbReference type="HOGENOM" id="CLU_139869_0_1_5"/>
<dbReference type="OrthoDB" id="9810484at2"/>
<dbReference type="Proteomes" id="UP000000643">
    <property type="component" value="Chromosome"/>
</dbReference>
<dbReference type="GO" id="GO:0005737">
    <property type="term" value="C:cytoplasm"/>
    <property type="evidence" value="ECO:0007669"/>
    <property type="project" value="UniProtKB-ARBA"/>
</dbReference>
<dbReference type="GO" id="GO:0015935">
    <property type="term" value="C:small ribosomal subunit"/>
    <property type="evidence" value="ECO:0007669"/>
    <property type="project" value="TreeGrafter"/>
</dbReference>
<dbReference type="GO" id="GO:0019843">
    <property type="term" value="F:rRNA binding"/>
    <property type="evidence" value="ECO:0007669"/>
    <property type="project" value="UniProtKB-UniRule"/>
</dbReference>
<dbReference type="GO" id="GO:0003735">
    <property type="term" value="F:structural constituent of ribosome"/>
    <property type="evidence" value="ECO:0007669"/>
    <property type="project" value="InterPro"/>
</dbReference>
<dbReference type="GO" id="GO:0006412">
    <property type="term" value="P:translation"/>
    <property type="evidence" value="ECO:0007669"/>
    <property type="project" value="UniProtKB-UniRule"/>
</dbReference>
<dbReference type="FunFam" id="1.10.287.1480:FF:000001">
    <property type="entry name" value="30S ribosomal protein S14"/>
    <property type="match status" value="1"/>
</dbReference>
<dbReference type="Gene3D" id="1.10.287.1480">
    <property type="match status" value="1"/>
</dbReference>
<dbReference type="HAMAP" id="MF_00537">
    <property type="entry name" value="Ribosomal_uS14_1"/>
    <property type="match status" value="1"/>
</dbReference>
<dbReference type="InterPro" id="IPR001209">
    <property type="entry name" value="Ribosomal_uS14"/>
</dbReference>
<dbReference type="InterPro" id="IPR023036">
    <property type="entry name" value="Ribosomal_uS14_bac/plastid"/>
</dbReference>
<dbReference type="InterPro" id="IPR018271">
    <property type="entry name" value="Ribosomal_uS14_CS"/>
</dbReference>
<dbReference type="NCBIfam" id="NF006477">
    <property type="entry name" value="PRK08881.1"/>
    <property type="match status" value="1"/>
</dbReference>
<dbReference type="PANTHER" id="PTHR19836">
    <property type="entry name" value="30S RIBOSOMAL PROTEIN S14"/>
    <property type="match status" value="1"/>
</dbReference>
<dbReference type="PANTHER" id="PTHR19836:SF19">
    <property type="entry name" value="SMALL RIBOSOMAL SUBUNIT PROTEIN US14M"/>
    <property type="match status" value="1"/>
</dbReference>
<dbReference type="Pfam" id="PF00253">
    <property type="entry name" value="Ribosomal_S14"/>
    <property type="match status" value="1"/>
</dbReference>
<dbReference type="SUPFAM" id="SSF57716">
    <property type="entry name" value="Glucocorticoid receptor-like (DNA-binding domain)"/>
    <property type="match status" value="1"/>
</dbReference>
<dbReference type="PROSITE" id="PS00527">
    <property type="entry name" value="RIBOSOMAL_S14"/>
    <property type="match status" value="1"/>
</dbReference>
<protein>
    <recommendedName>
        <fullName evidence="1">Small ribosomal subunit protein uS14</fullName>
    </recommendedName>
    <alternativeName>
        <fullName evidence="2">30S ribosomal protein S14</fullName>
    </alternativeName>
</protein>
<sequence length="101" mass="11712">MAKVSAVEKNKRREMMAKRYAARRARLKAIVMDQKVSLEERFKASIQLAELPRNSARVRVRNRCEVTGRPRAYYRKLQMSRIALRELGSLGHIPGVVKSSW</sequence>
<name>RS14_BARBK</name>
<feature type="chain" id="PRO_1000128307" description="Small ribosomal subunit protein uS14">
    <location>
        <begin position="1"/>
        <end position="101"/>
    </location>
</feature>
<reference key="1">
    <citation type="submission" date="2006-12" db="EMBL/GenBank/DDBJ databases">
        <authorList>
            <person name="Hendrix L."/>
            <person name="Mohamoud Y."/>
            <person name="Radune D."/>
            <person name="Shvartsbeyn A."/>
            <person name="Daugherty S."/>
            <person name="Dodson R."/>
            <person name="Durkin A.S."/>
            <person name="Harkins D."/>
            <person name="Huot H."/>
            <person name="Kothari S.P."/>
            <person name="Madupu R."/>
            <person name="Li J."/>
            <person name="Nelson W.C."/>
            <person name="Shrivastava S."/>
            <person name="Giglio M.G."/>
            <person name="Haft D."/>
            <person name="Selengut J."/>
            <person name="Fraser-Ligget C."/>
            <person name="Seshadri R."/>
        </authorList>
    </citation>
    <scope>NUCLEOTIDE SEQUENCE [LARGE SCALE GENOMIC DNA]</scope>
    <source>
        <strain>ATCC 35685 / KC583 / Herrer 020/F12,63</strain>
    </source>
</reference>
<keyword id="KW-0687">Ribonucleoprotein</keyword>
<keyword id="KW-0689">Ribosomal protein</keyword>
<keyword id="KW-0694">RNA-binding</keyword>
<keyword id="KW-0699">rRNA-binding</keyword>
<proteinExistence type="inferred from homology"/>
<comment type="function">
    <text evidence="1">Binds 16S rRNA, required for the assembly of 30S particles and may also be responsible for determining the conformation of the 16S rRNA at the A site.</text>
</comment>
<comment type="subunit">
    <text evidence="1">Part of the 30S ribosomal subunit. Contacts proteins S3 and S10.</text>
</comment>
<comment type="similarity">
    <text evidence="1">Belongs to the universal ribosomal protein uS14 family.</text>
</comment>
<evidence type="ECO:0000255" key="1">
    <source>
        <dbReference type="HAMAP-Rule" id="MF_00537"/>
    </source>
</evidence>
<evidence type="ECO:0000305" key="2"/>
<organism>
    <name type="scientific">Bartonella bacilliformis (strain ATCC 35685 / KC583 / Herrer 020/F12,63)</name>
    <dbReference type="NCBI Taxonomy" id="360095"/>
    <lineage>
        <taxon>Bacteria</taxon>
        <taxon>Pseudomonadati</taxon>
        <taxon>Pseudomonadota</taxon>
        <taxon>Alphaproteobacteria</taxon>
        <taxon>Hyphomicrobiales</taxon>
        <taxon>Bartonellaceae</taxon>
        <taxon>Bartonella</taxon>
    </lineage>
</organism>